<comment type="function">
    <text evidence="2">Member of the two-component regulatory system LytR/LytS that regulates genes involved in autolysis, programmed cell death, biofilm formation and cell wall metabolism. Also participates in sensing and responding to host defense cationic antimicrobial peptides (HDPs). Functions as a sensor protein kinase which is autophosphorylated at a histidine residue and transfers its phosphate group to the conserved aspartic acid residue in the regulatory domain of LytR. In turn, LytR binds to the upstream promoter regions of target genes including lrgA and lrgB, to positively regulate their expression. Also possesses a phosphatase activity that dephosphorylates and thus inactivates LytR.</text>
</comment>
<comment type="catalytic activity">
    <reaction evidence="2">
        <text>ATP + protein L-histidine = ADP + protein N-phospho-L-histidine.</text>
        <dbReference type="EC" id="2.7.13.3"/>
    </reaction>
</comment>
<comment type="subcellular location">
    <subcellularLocation>
        <location evidence="1">Cell membrane</location>
        <topology evidence="1">Multi-pass membrane protein</topology>
    </subcellularLocation>
</comment>
<comment type="PTM">
    <text evidence="2">Autophosphorylated on His-390.</text>
</comment>
<gene>
    <name type="primary">lytS</name>
    <name type="ordered locus">SAS0237</name>
</gene>
<name>LYTS_STAAS</name>
<feature type="chain" id="PRO_0000074796" description="Sensor histidine kinase/phosphatase LytS">
    <location>
        <begin position="1"/>
        <end position="584"/>
    </location>
</feature>
<feature type="transmembrane region" description="Helical" evidence="3">
    <location>
        <begin position="6"/>
        <end position="28"/>
    </location>
</feature>
<feature type="transmembrane region" description="Helical" evidence="3">
    <location>
        <begin position="40"/>
        <end position="62"/>
    </location>
</feature>
<feature type="transmembrane region" description="Helical" evidence="3">
    <location>
        <begin position="88"/>
        <end position="110"/>
    </location>
</feature>
<feature type="transmembrane region" description="Helical" evidence="3">
    <location>
        <begin position="123"/>
        <end position="140"/>
    </location>
</feature>
<feature type="transmembrane region" description="Helical" evidence="3">
    <location>
        <begin position="155"/>
        <end position="172"/>
    </location>
</feature>
<feature type="transmembrane region" description="Helical" evidence="3">
    <location>
        <begin position="184"/>
        <end position="206"/>
    </location>
</feature>
<feature type="domain" description="GAF">
    <location>
        <begin position="311"/>
        <end position="363"/>
    </location>
</feature>
<feature type="domain" description="Histidine kinase">
    <location>
        <begin position="363"/>
        <end position="580"/>
    </location>
</feature>
<feature type="modified residue" description="Phosphohistidine; by autocatalysis" evidence="1">
    <location>
        <position position="390"/>
    </location>
</feature>
<protein>
    <recommendedName>
        <fullName>Sensor histidine kinase/phosphatase LytS</fullName>
        <ecNumber evidence="2">2.7.13.3</ecNumber>
        <ecNumber evidence="2">3.1.3.-</ecNumber>
    </recommendedName>
    <alternativeName>
        <fullName>Autolysin sensor kinase</fullName>
    </alternativeName>
</protein>
<reference key="1">
    <citation type="journal article" date="2004" name="Proc. Natl. Acad. Sci. U.S.A.">
        <title>Complete genomes of two clinical Staphylococcus aureus strains: evidence for the rapid evolution of virulence and drug resistance.</title>
        <authorList>
            <person name="Holden M.T.G."/>
            <person name="Feil E.J."/>
            <person name="Lindsay J.A."/>
            <person name="Peacock S.J."/>
            <person name="Day N.P.J."/>
            <person name="Enright M.C."/>
            <person name="Foster T.J."/>
            <person name="Moore C.E."/>
            <person name="Hurst L."/>
            <person name="Atkin R."/>
            <person name="Barron A."/>
            <person name="Bason N."/>
            <person name="Bentley S.D."/>
            <person name="Chillingworth C."/>
            <person name="Chillingworth T."/>
            <person name="Churcher C."/>
            <person name="Clark L."/>
            <person name="Corton C."/>
            <person name="Cronin A."/>
            <person name="Doggett J."/>
            <person name="Dowd L."/>
            <person name="Feltwell T."/>
            <person name="Hance Z."/>
            <person name="Harris B."/>
            <person name="Hauser H."/>
            <person name="Holroyd S."/>
            <person name="Jagels K."/>
            <person name="James K.D."/>
            <person name="Lennard N."/>
            <person name="Line A."/>
            <person name="Mayes R."/>
            <person name="Moule S."/>
            <person name="Mungall K."/>
            <person name="Ormond D."/>
            <person name="Quail M.A."/>
            <person name="Rabbinowitsch E."/>
            <person name="Rutherford K.M."/>
            <person name="Sanders M."/>
            <person name="Sharp S."/>
            <person name="Simmonds M."/>
            <person name="Stevens K."/>
            <person name="Whitehead S."/>
            <person name="Barrell B.G."/>
            <person name="Spratt B.G."/>
            <person name="Parkhill J."/>
        </authorList>
    </citation>
    <scope>NUCLEOTIDE SEQUENCE [LARGE SCALE GENOMIC DNA]</scope>
    <source>
        <strain>MSSA476</strain>
    </source>
</reference>
<proteinExistence type="inferred from homology"/>
<organism>
    <name type="scientific">Staphylococcus aureus (strain MSSA476)</name>
    <dbReference type="NCBI Taxonomy" id="282459"/>
    <lineage>
        <taxon>Bacteria</taxon>
        <taxon>Bacillati</taxon>
        <taxon>Bacillota</taxon>
        <taxon>Bacilli</taxon>
        <taxon>Bacillales</taxon>
        <taxon>Staphylococcaceae</taxon>
        <taxon>Staphylococcus</taxon>
    </lineage>
</organism>
<evidence type="ECO:0000250" key="1"/>
<evidence type="ECO:0000250" key="2">
    <source>
        <dbReference type="UniProtKB" id="Q53705"/>
    </source>
</evidence>
<evidence type="ECO:0000255" key="3"/>
<dbReference type="EC" id="2.7.13.3" evidence="2"/>
<dbReference type="EC" id="3.1.3.-" evidence="2"/>
<dbReference type="EMBL" id="BX571857">
    <property type="protein sequence ID" value="CAG42007.1"/>
    <property type="molecule type" value="Genomic_DNA"/>
</dbReference>
<dbReference type="RefSeq" id="WP_000950281.1">
    <property type="nucleotide sequence ID" value="NC_002953.3"/>
</dbReference>
<dbReference type="SMR" id="Q6GCL2"/>
<dbReference type="KEGG" id="sas:SAS0237"/>
<dbReference type="HOGENOM" id="CLU_020473_3_3_9"/>
<dbReference type="GO" id="GO:0005886">
    <property type="term" value="C:plasma membrane"/>
    <property type="evidence" value="ECO:0007669"/>
    <property type="project" value="UniProtKB-SubCell"/>
</dbReference>
<dbReference type="GO" id="GO:0005524">
    <property type="term" value="F:ATP binding"/>
    <property type="evidence" value="ECO:0007669"/>
    <property type="project" value="UniProtKB-KW"/>
</dbReference>
<dbReference type="GO" id="GO:0016787">
    <property type="term" value="F:hydrolase activity"/>
    <property type="evidence" value="ECO:0007669"/>
    <property type="project" value="UniProtKB-KW"/>
</dbReference>
<dbReference type="GO" id="GO:0000155">
    <property type="term" value="F:phosphorelay sensor kinase activity"/>
    <property type="evidence" value="ECO:0007669"/>
    <property type="project" value="InterPro"/>
</dbReference>
<dbReference type="GO" id="GO:0071555">
    <property type="term" value="P:cell wall organization"/>
    <property type="evidence" value="ECO:0007669"/>
    <property type="project" value="InterPro"/>
</dbReference>
<dbReference type="CDD" id="cd16957">
    <property type="entry name" value="HATPase_LytS-like"/>
    <property type="match status" value="1"/>
</dbReference>
<dbReference type="Gene3D" id="1.10.1760.20">
    <property type="match status" value="1"/>
</dbReference>
<dbReference type="Gene3D" id="3.30.450.40">
    <property type="match status" value="1"/>
</dbReference>
<dbReference type="Gene3D" id="3.30.565.10">
    <property type="entry name" value="Histidine kinase-like ATPase, C-terminal domain"/>
    <property type="match status" value="1"/>
</dbReference>
<dbReference type="InterPro" id="IPR050640">
    <property type="entry name" value="Bact_2-comp_sensor_kinase"/>
</dbReference>
<dbReference type="InterPro" id="IPR003018">
    <property type="entry name" value="GAF"/>
</dbReference>
<dbReference type="InterPro" id="IPR029016">
    <property type="entry name" value="GAF-like_dom_sf"/>
</dbReference>
<dbReference type="InterPro" id="IPR036890">
    <property type="entry name" value="HATPase_C_sf"/>
</dbReference>
<dbReference type="InterPro" id="IPR010559">
    <property type="entry name" value="Sig_transdc_His_kin_internal"/>
</dbReference>
<dbReference type="InterPro" id="IPR011620">
    <property type="entry name" value="Sig_transdc_His_kinase_LytS_TM"/>
</dbReference>
<dbReference type="PANTHER" id="PTHR34220">
    <property type="entry name" value="SENSOR HISTIDINE KINASE YPDA"/>
    <property type="match status" value="1"/>
</dbReference>
<dbReference type="PANTHER" id="PTHR34220:SF7">
    <property type="entry name" value="SENSOR HISTIDINE KINASE YPDA"/>
    <property type="match status" value="1"/>
</dbReference>
<dbReference type="Pfam" id="PF07694">
    <property type="entry name" value="5TM-5TMR_LYT"/>
    <property type="match status" value="1"/>
</dbReference>
<dbReference type="Pfam" id="PF02518">
    <property type="entry name" value="HATPase_c"/>
    <property type="match status" value="1"/>
</dbReference>
<dbReference type="Pfam" id="PF06580">
    <property type="entry name" value="His_kinase"/>
    <property type="match status" value="1"/>
</dbReference>
<dbReference type="SMART" id="SM00065">
    <property type="entry name" value="GAF"/>
    <property type="match status" value="1"/>
</dbReference>
<dbReference type="SMART" id="SM00387">
    <property type="entry name" value="HATPase_c"/>
    <property type="match status" value="1"/>
</dbReference>
<dbReference type="SUPFAM" id="SSF55874">
    <property type="entry name" value="ATPase domain of HSP90 chaperone/DNA topoisomerase II/histidine kinase"/>
    <property type="match status" value="1"/>
</dbReference>
<dbReference type="SUPFAM" id="SSF55781">
    <property type="entry name" value="GAF domain-like"/>
    <property type="match status" value="1"/>
</dbReference>
<accession>Q6GCL2</accession>
<sequence length="584" mass="65029">MLSLTMLLLERVGLIIILAYVLMNIPYFKNLMNRRRTWKARWQLCIIFSLFALMSNLTGIVIDHQHSLSGSVYFRLDDDVSLANTRVLTIGVAGLVGGPFVGLFVGVISGIFRVYMGGADAQVYLISSIFIGIIAGYFGLQAQRRKRYPSIAKSAMIGIVMEMIQMLSILTFSHDKAYAVDLISLIALPMIIVNSVGTAIFMSIIISTLKQEEQMKAVQTHDVLQLMNQTLPYFKEGLNRESAQQIAMIIKNLMKVSAVAITSKNEILSHVGAGSDHHIPTNEILTSLSKDVLKSGKLKEVHTKEEIGCSHPNCPLRAAIVIPLEMHGSIVGTLKMYFTNPNDLTFVERQLAEGLANIFSSQIELGEAETQSKLLKDAEIKSLQAQVSPHFFFNSINTISALVRINSEKARELLLELSYFFRANLQGSKQHTITLDKELSQVRAYLSLEQARYPGRFNININVEDKYRDVLVPPFLIQILVENAIKHAFTNRKQGNDIDVSVIKETATHVRIIVQDNGQGISKDKMHLLGETSVESESGTGSALENLNLRLKGLFGKSAALQFESTSSGTTFWCVLPYERQEEE</sequence>
<keyword id="KW-0067">ATP-binding</keyword>
<keyword id="KW-1003">Cell membrane</keyword>
<keyword id="KW-0378">Hydrolase</keyword>
<keyword id="KW-0418">Kinase</keyword>
<keyword id="KW-0472">Membrane</keyword>
<keyword id="KW-0547">Nucleotide-binding</keyword>
<keyword id="KW-0597">Phosphoprotein</keyword>
<keyword id="KW-0808">Transferase</keyword>
<keyword id="KW-0812">Transmembrane</keyword>
<keyword id="KW-1133">Transmembrane helix</keyword>
<keyword id="KW-0902">Two-component regulatory system</keyword>